<feature type="chain" id="PRO_1000091367" description="Leucine--tRNA ligase">
    <location>
        <begin position="1"/>
        <end position="880"/>
    </location>
</feature>
<feature type="short sequence motif" description="'HIGH' region">
    <location>
        <begin position="46"/>
        <end position="56"/>
    </location>
</feature>
<feature type="short sequence motif" description="'KMSKS' region">
    <location>
        <begin position="638"/>
        <end position="642"/>
    </location>
</feature>
<feature type="binding site" evidence="1">
    <location>
        <position position="641"/>
    </location>
    <ligand>
        <name>ATP</name>
        <dbReference type="ChEBI" id="CHEBI:30616"/>
    </ligand>
</feature>
<keyword id="KW-0030">Aminoacyl-tRNA synthetase</keyword>
<keyword id="KW-0067">ATP-binding</keyword>
<keyword id="KW-0963">Cytoplasm</keyword>
<keyword id="KW-0436">Ligase</keyword>
<keyword id="KW-0547">Nucleotide-binding</keyword>
<keyword id="KW-0648">Protein biosynthesis</keyword>
<dbReference type="EC" id="6.1.1.4" evidence="1"/>
<dbReference type="EMBL" id="CP001111">
    <property type="protein sequence ID" value="ACF52611.1"/>
    <property type="molecule type" value="Genomic_DNA"/>
</dbReference>
<dbReference type="RefSeq" id="WP_012511768.1">
    <property type="nucleotide sequence ID" value="NC_011071.1"/>
</dbReference>
<dbReference type="SMR" id="B4SRE7"/>
<dbReference type="STRING" id="391008.Smal_2912"/>
<dbReference type="KEGG" id="smt:Smal_2912"/>
<dbReference type="eggNOG" id="COG0495">
    <property type="taxonomic scope" value="Bacteria"/>
</dbReference>
<dbReference type="HOGENOM" id="CLU_004427_0_0_6"/>
<dbReference type="OrthoDB" id="9810365at2"/>
<dbReference type="Proteomes" id="UP000001867">
    <property type="component" value="Chromosome"/>
</dbReference>
<dbReference type="GO" id="GO:0005829">
    <property type="term" value="C:cytosol"/>
    <property type="evidence" value="ECO:0007669"/>
    <property type="project" value="TreeGrafter"/>
</dbReference>
<dbReference type="GO" id="GO:0002161">
    <property type="term" value="F:aminoacyl-tRNA deacylase activity"/>
    <property type="evidence" value="ECO:0007669"/>
    <property type="project" value="InterPro"/>
</dbReference>
<dbReference type="GO" id="GO:0005524">
    <property type="term" value="F:ATP binding"/>
    <property type="evidence" value="ECO:0007669"/>
    <property type="project" value="UniProtKB-UniRule"/>
</dbReference>
<dbReference type="GO" id="GO:0004823">
    <property type="term" value="F:leucine-tRNA ligase activity"/>
    <property type="evidence" value="ECO:0007669"/>
    <property type="project" value="UniProtKB-UniRule"/>
</dbReference>
<dbReference type="GO" id="GO:0006429">
    <property type="term" value="P:leucyl-tRNA aminoacylation"/>
    <property type="evidence" value="ECO:0007669"/>
    <property type="project" value="UniProtKB-UniRule"/>
</dbReference>
<dbReference type="CDD" id="cd07958">
    <property type="entry name" value="Anticodon_Ia_Leu_BEm"/>
    <property type="match status" value="1"/>
</dbReference>
<dbReference type="CDD" id="cd00812">
    <property type="entry name" value="LeuRS_core"/>
    <property type="match status" value="1"/>
</dbReference>
<dbReference type="FunFam" id="1.10.730.10:FF:000003">
    <property type="entry name" value="Leucine--tRNA ligase"/>
    <property type="match status" value="1"/>
</dbReference>
<dbReference type="FunFam" id="2.20.28.290:FF:000001">
    <property type="entry name" value="Leucine--tRNA ligase"/>
    <property type="match status" value="1"/>
</dbReference>
<dbReference type="FunFam" id="3.10.20.590:FF:000001">
    <property type="entry name" value="Leucine--tRNA ligase"/>
    <property type="match status" value="1"/>
</dbReference>
<dbReference type="FunFam" id="3.40.50.620:FF:000003">
    <property type="entry name" value="Leucine--tRNA ligase"/>
    <property type="match status" value="1"/>
</dbReference>
<dbReference type="FunFam" id="3.40.50.620:FF:000124">
    <property type="entry name" value="Leucine--tRNA ligase"/>
    <property type="match status" value="1"/>
</dbReference>
<dbReference type="FunFam" id="3.90.740.10:FF:000012">
    <property type="entry name" value="Leucine--tRNA ligase"/>
    <property type="match status" value="1"/>
</dbReference>
<dbReference type="Gene3D" id="2.20.28.290">
    <property type="match status" value="1"/>
</dbReference>
<dbReference type="Gene3D" id="3.10.20.590">
    <property type="match status" value="1"/>
</dbReference>
<dbReference type="Gene3D" id="3.40.50.620">
    <property type="entry name" value="HUPs"/>
    <property type="match status" value="2"/>
</dbReference>
<dbReference type="Gene3D" id="1.10.730.10">
    <property type="entry name" value="Isoleucyl-tRNA Synthetase, Domain 1"/>
    <property type="match status" value="1"/>
</dbReference>
<dbReference type="Gene3D" id="3.90.740.10">
    <property type="entry name" value="Valyl/Leucyl/Isoleucyl-tRNA synthetase, editing domain"/>
    <property type="match status" value="1"/>
</dbReference>
<dbReference type="HAMAP" id="MF_00049_B">
    <property type="entry name" value="Leu_tRNA_synth_B"/>
    <property type="match status" value="1"/>
</dbReference>
<dbReference type="InterPro" id="IPR001412">
    <property type="entry name" value="aa-tRNA-synth_I_CS"/>
</dbReference>
<dbReference type="InterPro" id="IPR002300">
    <property type="entry name" value="aa-tRNA-synth_Ia"/>
</dbReference>
<dbReference type="InterPro" id="IPR002302">
    <property type="entry name" value="Leu-tRNA-ligase"/>
</dbReference>
<dbReference type="InterPro" id="IPR025709">
    <property type="entry name" value="Leu_tRNA-synth_edit"/>
</dbReference>
<dbReference type="InterPro" id="IPR013155">
    <property type="entry name" value="M/V/L/I-tRNA-synth_anticd-bd"/>
</dbReference>
<dbReference type="InterPro" id="IPR015413">
    <property type="entry name" value="Methionyl/Leucyl_tRNA_Synth"/>
</dbReference>
<dbReference type="InterPro" id="IPR014729">
    <property type="entry name" value="Rossmann-like_a/b/a_fold"/>
</dbReference>
<dbReference type="InterPro" id="IPR009080">
    <property type="entry name" value="tRNAsynth_Ia_anticodon-bd"/>
</dbReference>
<dbReference type="InterPro" id="IPR009008">
    <property type="entry name" value="Val/Leu/Ile-tRNA-synth_edit"/>
</dbReference>
<dbReference type="NCBIfam" id="TIGR00396">
    <property type="entry name" value="leuS_bact"/>
    <property type="match status" value="1"/>
</dbReference>
<dbReference type="PANTHER" id="PTHR43740:SF2">
    <property type="entry name" value="LEUCINE--TRNA LIGASE, MITOCHONDRIAL"/>
    <property type="match status" value="1"/>
</dbReference>
<dbReference type="PANTHER" id="PTHR43740">
    <property type="entry name" value="LEUCYL-TRNA SYNTHETASE"/>
    <property type="match status" value="1"/>
</dbReference>
<dbReference type="Pfam" id="PF08264">
    <property type="entry name" value="Anticodon_1"/>
    <property type="match status" value="1"/>
</dbReference>
<dbReference type="Pfam" id="PF00133">
    <property type="entry name" value="tRNA-synt_1"/>
    <property type="match status" value="2"/>
</dbReference>
<dbReference type="Pfam" id="PF13603">
    <property type="entry name" value="tRNA-synt_1_2"/>
    <property type="match status" value="1"/>
</dbReference>
<dbReference type="Pfam" id="PF09334">
    <property type="entry name" value="tRNA-synt_1g"/>
    <property type="match status" value="1"/>
</dbReference>
<dbReference type="PRINTS" id="PR00985">
    <property type="entry name" value="TRNASYNTHLEU"/>
</dbReference>
<dbReference type="SUPFAM" id="SSF47323">
    <property type="entry name" value="Anticodon-binding domain of a subclass of class I aminoacyl-tRNA synthetases"/>
    <property type="match status" value="1"/>
</dbReference>
<dbReference type="SUPFAM" id="SSF52374">
    <property type="entry name" value="Nucleotidylyl transferase"/>
    <property type="match status" value="1"/>
</dbReference>
<dbReference type="SUPFAM" id="SSF50677">
    <property type="entry name" value="ValRS/IleRS/LeuRS editing domain"/>
    <property type="match status" value="1"/>
</dbReference>
<dbReference type="PROSITE" id="PS00178">
    <property type="entry name" value="AA_TRNA_LIGASE_I"/>
    <property type="match status" value="1"/>
</dbReference>
<sequence>MTSVEPNVYDPQQVESAAQQYWDATRAFEVDEASDKPKYYCLSMLPYPSGALHMGHVRNYTIGDVISRYKRMTGHNVLQPMGWDAFGLPAENAAIKNKTAPAAWTYKNIDHMRTQLKSLGYAIDWSREFATCRPDYYVHEQRMFTRLMRKGLAYRRNAVVNWDPVDQTVLANEQVIDGRGWRSGALVEKREIPQWFLRITDYAQELLDGLDELDGWPESVKTMQRNWIGRSEGLEIQFDVRDVDGGVLDPLRVFTTRPDTVMGVTFVSIAAEHPLALHAAKNNPELAALLADLKQGGVSEAELETQEKRGMDTGLRAIHPVTGEQVPVWVANFVLMGYGTGAVMAVPGHDQRDNEVANKYGLPIVQVIALKDPRSEEERSWDATRWQDWYSDKSRAFELVNSAEFDGLDFQGAFEALAERFERKAQGQRRVNYRLRDWGVSRQRYWGCPIPVIYCAKCGAVPVPEEQLPVVLPEDVAFAGTGSPIKTDPEWRKTTCPECGGAAERETDTFDTFMESSWYYARYTSPGARDAVDKRGNYWLPVDQYIGGIEHAILHLMYFRFYHKLLRDARMVDSNEPARNLLCQGMVIAETYYRPNPDGSRDWINPADVDVQRDERGRITGATLIADGQPVVVGGTEKMSKSKNNGVDPQAMVGKYGADTVRLFSMFAAPPEQSLEWNEAGVDGMARFLRRLWAQVQKHAADGAAPALDVAVLDASQKALRRKTHETIGKVGDDYGRRHSFNTAIAAVMELMNALAKFDDGSDQGRAVRQEALQAIVLLLNPITPHASHTLWQVLGHGETLLEDQPFPQADAAALVRDALTLAVQVNGKLRGTIEVAADAPREQVEALALAEPNAAKFMEGLTVRKIIIVPGKIVNIVVA</sequence>
<gene>
    <name evidence="1" type="primary">leuS</name>
    <name type="ordered locus">Smal_2912</name>
</gene>
<name>SYL_STRM5</name>
<proteinExistence type="inferred from homology"/>
<evidence type="ECO:0000255" key="1">
    <source>
        <dbReference type="HAMAP-Rule" id="MF_00049"/>
    </source>
</evidence>
<comment type="catalytic activity">
    <reaction evidence="1">
        <text>tRNA(Leu) + L-leucine + ATP = L-leucyl-tRNA(Leu) + AMP + diphosphate</text>
        <dbReference type="Rhea" id="RHEA:11688"/>
        <dbReference type="Rhea" id="RHEA-COMP:9613"/>
        <dbReference type="Rhea" id="RHEA-COMP:9622"/>
        <dbReference type="ChEBI" id="CHEBI:30616"/>
        <dbReference type="ChEBI" id="CHEBI:33019"/>
        <dbReference type="ChEBI" id="CHEBI:57427"/>
        <dbReference type="ChEBI" id="CHEBI:78442"/>
        <dbReference type="ChEBI" id="CHEBI:78494"/>
        <dbReference type="ChEBI" id="CHEBI:456215"/>
        <dbReference type="EC" id="6.1.1.4"/>
    </reaction>
</comment>
<comment type="subcellular location">
    <subcellularLocation>
        <location evidence="1">Cytoplasm</location>
    </subcellularLocation>
</comment>
<comment type="similarity">
    <text evidence="1">Belongs to the class-I aminoacyl-tRNA synthetase family.</text>
</comment>
<reference key="1">
    <citation type="submission" date="2008-06" db="EMBL/GenBank/DDBJ databases">
        <title>Complete sequence of Stenotrophomonas maltophilia R551-3.</title>
        <authorList>
            <consortium name="US DOE Joint Genome Institute"/>
            <person name="Lucas S."/>
            <person name="Copeland A."/>
            <person name="Lapidus A."/>
            <person name="Glavina del Rio T."/>
            <person name="Dalin E."/>
            <person name="Tice H."/>
            <person name="Pitluck S."/>
            <person name="Chain P."/>
            <person name="Malfatti S."/>
            <person name="Shin M."/>
            <person name="Vergez L."/>
            <person name="Lang D."/>
            <person name="Schmutz J."/>
            <person name="Larimer F."/>
            <person name="Land M."/>
            <person name="Hauser L."/>
            <person name="Kyrpides N."/>
            <person name="Mikhailova N."/>
            <person name="Taghavi S."/>
            <person name="Monchy S."/>
            <person name="Newman L."/>
            <person name="Vangronsveld J."/>
            <person name="van der Lelie D."/>
            <person name="Richardson P."/>
        </authorList>
    </citation>
    <scope>NUCLEOTIDE SEQUENCE [LARGE SCALE GENOMIC DNA]</scope>
    <source>
        <strain>R551-3</strain>
    </source>
</reference>
<accession>B4SRE7</accession>
<protein>
    <recommendedName>
        <fullName evidence="1">Leucine--tRNA ligase</fullName>
        <ecNumber evidence="1">6.1.1.4</ecNumber>
    </recommendedName>
    <alternativeName>
        <fullName evidence="1">Leucyl-tRNA synthetase</fullName>
        <shortName evidence="1">LeuRS</shortName>
    </alternativeName>
</protein>
<organism>
    <name type="scientific">Stenotrophomonas maltophilia (strain R551-3)</name>
    <dbReference type="NCBI Taxonomy" id="391008"/>
    <lineage>
        <taxon>Bacteria</taxon>
        <taxon>Pseudomonadati</taxon>
        <taxon>Pseudomonadota</taxon>
        <taxon>Gammaproteobacteria</taxon>
        <taxon>Lysobacterales</taxon>
        <taxon>Lysobacteraceae</taxon>
        <taxon>Stenotrophomonas</taxon>
        <taxon>Stenotrophomonas maltophilia group</taxon>
    </lineage>
</organism>